<reference key="1">
    <citation type="journal article" date="2002" name="Proc. Natl. Acad. Sci. U.S.A.">
        <title>Extensive mosaic structure revealed by the complete genome sequence of uropathogenic Escherichia coli.</title>
        <authorList>
            <person name="Welch R.A."/>
            <person name="Burland V."/>
            <person name="Plunkett G. III"/>
            <person name="Redford P."/>
            <person name="Roesch P."/>
            <person name="Rasko D."/>
            <person name="Buckles E.L."/>
            <person name="Liou S.-R."/>
            <person name="Boutin A."/>
            <person name="Hackett J."/>
            <person name="Stroud D."/>
            <person name="Mayhew G.F."/>
            <person name="Rose D.J."/>
            <person name="Zhou S."/>
            <person name="Schwartz D.C."/>
            <person name="Perna N.T."/>
            <person name="Mobley H.L.T."/>
            <person name="Donnenberg M.S."/>
            <person name="Blattner F.R."/>
        </authorList>
    </citation>
    <scope>NUCLEOTIDE SEQUENCE [LARGE SCALE GENOMIC DNA]</scope>
    <source>
        <strain>CFT073 / ATCC 700928 / UPEC</strain>
    </source>
</reference>
<feature type="initiator methionine" description="Removed" evidence="1">
    <location>
        <position position="1"/>
    </location>
</feature>
<feature type="chain" id="PRO_0000133883" description="Enolase">
    <location>
        <begin position="2"/>
        <end position="432"/>
    </location>
</feature>
<feature type="active site" description="Proton donor" evidence="2">
    <location>
        <position position="209"/>
    </location>
</feature>
<feature type="active site" description="Proton acceptor" evidence="2">
    <location>
        <position position="342"/>
    </location>
</feature>
<feature type="binding site" evidence="2">
    <location>
        <position position="167"/>
    </location>
    <ligand>
        <name>(2R)-2-phosphoglycerate</name>
        <dbReference type="ChEBI" id="CHEBI:58289"/>
    </ligand>
</feature>
<feature type="binding site" evidence="2">
    <location>
        <position position="246"/>
    </location>
    <ligand>
        <name>Mg(2+)</name>
        <dbReference type="ChEBI" id="CHEBI:18420"/>
    </ligand>
</feature>
<feature type="binding site" evidence="2">
    <location>
        <position position="290"/>
    </location>
    <ligand>
        <name>Mg(2+)</name>
        <dbReference type="ChEBI" id="CHEBI:18420"/>
    </ligand>
</feature>
<feature type="binding site" evidence="2">
    <location>
        <position position="317"/>
    </location>
    <ligand>
        <name>Mg(2+)</name>
        <dbReference type="ChEBI" id="CHEBI:18420"/>
    </ligand>
</feature>
<feature type="binding site" evidence="2">
    <location>
        <position position="342"/>
    </location>
    <ligand>
        <name>(2R)-2-phosphoglycerate</name>
        <dbReference type="ChEBI" id="CHEBI:58289"/>
    </ligand>
</feature>
<feature type="binding site" evidence="2">
    <location>
        <position position="371"/>
    </location>
    <ligand>
        <name>(2R)-2-phosphoglycerate</name>
        <dbReference type="ChEBI" id="CHEBI:58289"/>
    </ligand>
</feature>
<feature type="binding site" evidence="2">
    <location>
        <position position="372"/>
    </location>
    <ligand>
        <name>(2R)-2-phosphoglycerate</name>
        <dbReference type="ChEBI" id="CHEBI:58289"/>
    </ligand>
</feature>
<feature type="binding site" evidence="2">
    <location>
        <position position="393"/>
    </location>
    <ligand>
        <name>(2R)-2-phosphoglycerate</name>
        <dbReference type="ChEBI" id="CHEBI:58289"/>
    </ligand>
</feature>
<dbReference type="EC" id="4.2.1.11" evidence="2"/>
<dbReference type="EMBL" id="AE014075">
    <property type="protein sequence ID" value="AAN81792.1"/>
    <property type="molecule type" value="Genomic_DNA"/>
</dbReference>
<dbReference type="RefSeq" id="WP_000036723.1">
    <property type="nucleotide sequence ID" value="NZ_CP051263.1"/>
</dbReference>
<dbReference type="SMR" id="P0A6Q0"/>
<dbReference type="STRING" id="199310.c3344"/>
<dbReference type="GeneID" id="93779219"/>
<dbReference type="KEGG" id="ecc:c3344"/>
<dbReference type="eggNOG" id="COG0148">
    <property type="taxonomic scope" value="Bacteria"/>
</dbReference>
<dbReference type="HOGENOM" id="CLU_031223_2_1_6"/>
<dbReference type="BioCyc" id="ECOL199310:C3344-MONOMER"/>
<dbReference type="UniPathway" id="UPA00109">
    <property type="reaction ID" value="UER00187"/>
</dbReference>
<dbReference type="Proteomes" id="UP000001410">
    <property type="component" value="Chromosome"/>
</dbReference>
<dbReference type="GO" id="GO:0009986">
    <property type="term" value="C:cell surface"/>
    <property type="evidence" value="ECO:0007669"/>
    <property type="project" value="UniProtKB-SubCell"/>
</dbReference>
<dbReference type="GO" id="GO:0005576">
    <property type="term" value="C:extracellular region"/>
    <property type="evidence" value="ECO:0007669"/>
    <property type="project" value="UniProtKB-SubCell"/>
</dbReference>
<dbReference type="GO" id="GO:0000015">
    <property type="term" value="C:phosphopyruvate hydratase complex"/>
    <property type="evidence" value="ECO:0007669"/>
    <property type="project" value="InterPro"/>
</dbReference>
<dbReference type="GO" id="GO:0000287">
    <property type="term" value="F:magnesium ion binding"/>
    <property type="evidence" value="ECO:0007669"/>
    <property type="project" value="UniProtKB-UniRule"/>
</dbReference>
<dbReference type="GO" id="GO:0004634">
    <property type="term" value="F:phosphopyruvate hydratase activity"/>
    <property type="evidence" value="ECO:0007669"/>
    <property type="project" value="UniProtKB-UniRule"/>
</dbReference>
<dbReference type="GO" id="GO:0006096">
    <property type="term" value="P:glycolytic process"/>
    <property type="evidence" value="ECO:0007669"/>
    <property type="project" value="UniProtKB-UniRule"/>
</dbReference>
<dbReference type="CDD" id="cd03313">
    <property type="entry name" value="enolase"/>
    <property type="match status" value="1"/>
</dbReference>
<dbReference type="FunFam" id="3.20.20.120:FF:000001">
    <property type="entry name" value="Enolase"/>
    <property type="match status" value="1"/>
</dbReference>
<dbReference type="FunFam" id="3.30.390.10:FF:000001">
    <property type="entry name" value="Enolase"/>
    <property type="match status" value="1"/>
</dbReference>
<dbReference type="Gene3D" id="3.20.20.120">
    <property type="entry name" value="Enolase-like C-terminal domain"/>
    <property type="match status" value="1"/>
</dbReference>
<dbReference type="Gene3D" id="3.30.390.10">
    <property type="entry name" value="Enolase-like, N-terminal domain"/>
    <property type="match status" value="1"/>
</dbReference>
<dbReference type="HAMAP" id="MF_00318">
    <property type="entry name" value="Enolase"/>
    <property type="match status" value="1"/>
</dbReference>
<dbReference type="InterPro" id="IPR000941">
    <property type="entry name" value="Enolase"/>
</dbReference>
<dbReference type="InterPro" id="IPR036849">
    <property type="entry name" value="Enolase-like_C_sf"/>
</dbReference>
<dbReference type="InterPro" id="IPR029017">
    <property type="entry name" value="Enolase-like_N"/>
</dbReference>
<dbReference type="InterPro" id="IPR020810">
    <property type="entry name" value="Enolase_C"/>
</dbReference>
<dbReference type="InterPro" id="IPR020809">
    <property type="entry name" value="Enolase_CS"/>
</dbReference>
<dbReference type="InterPro" id="IPR020811">
    <property type="entry name" value="Enolase_N"/>
</dbReference>
<dbReference type="NCBIfam" id="TIGR01060">
    <property type="entry name" value="eno"/>
    <property type="match status" value="1"/>
</dbReference>
<dbReference type="PANTHER" id="PTHR11902">
    <property type="entry name" value="ENOLASE"/>
    <property type="match status" value="1"/>
</dbReference>
<dbReference type="PANTHER" id="PTHR11902:SF1">
    <property type="entry name" value="ENOLASE"/>
    <property type="match status" value="1"/>
</dbReference>
<dbReference type="Pfam" id="PF00113">
    <property type="entry name" value="Enolase_C"/>
    <property type="match status" value="1"/>
</dbReference>
<dbReference type="Pfam" id="PF03952">
    <property type="entry name" value="Enolase_N"/>
    <property type="match status" value="1"/>
</dbReference>
<dbReference type="PIRSF" id="PIRSF001400">
    <property type="entry name" value="Enolase"/>
    <property type="match status" value="1"/>
</dbReference>
<dbReference type="PRINTS" id="PR00148">
    <property type="entry name" value="ENOLASE"/>
</dbReference>
<dbReference type="SFLD" id="SFLDS00001">
    <property type="entry name" value="Enolase"/>
    <property type="match status" value="1"/>
</dbReference>
<dbReference type="SFLD" id="SFLDF00002">
    <property type="entry name" value="enolase"/>
    <property type="match status" value="1"/>
</dbReference>
<dbReference type="SMART" id="SM01192">
    <property type="entry name" value="Enolase_C"/>
    <property type="match status" value="1"/>
</dbReference>
<dbReference type="SMART" id="SM01193">
    <property type="entry name" value="Enolase_N"/>
    <property type="match status" value="1"/>
</dbReference>
<dbReference type="SUPFAM" id="SSF51604">
    <property type="entry name" value="Enolase C-terminal domain-like"/>
    <property type="match status" value="1"/>
</dbReference>
<dbReference type="SUPFAM" id="SSF54826">
    <property type="entry name" value="Enolase N-terminal domain-like"/>
    <property type="match status" value="1"/>
</dbReference>
<dbReference type="PROSITE" id="PS00164">
    <property type="entry name" value="ENOLASE"/>
    <property type="match status" value="1"/>
</dbReference>
<comment type="function">
    <text evidence="2">Catalyzes the reversible conversion of 2-phosphoglycerate (2-PG) into phosphoenolpyruvate (PEP). It is essential for the degradation of carbohydrates via glycolysis.</text>
</comment>
<comment type="catalytic activity">
    <reaction evidence="2">
        <text>(2R)-2-phosphoglycerate = phosphoenolpyruvate + H2O</text>
        <dbReference type="Rhea" id="RHEA:10164"/>
        <dbReference type="ChEBI" id="CHEBI:15377"/>
        <dbReference type="ChEBI" id="CHEBI:58289"/>
        <dbReference type="ChEBI" id="CHEBI:58702"/>
        <dbReference type="EC" id="4.2.1.11"/>
    </reaction>
</comment>
<comment type="cofactor">
    <cofactor evidence="2">
        <name>Mg(2+)</name>
        <dbReference type="ChEBI" id="CHEBI:18420"/>
    </cofactor>
    <text evidence="2">Binds a second Mg(2+) ion via substrate during catalysis.</text>
</comment>
<comment type="pathway">
    <text evidence="2">Carbohydrate degradation; glycolysis; pyruvate from D-glyceraldehyde 3-phosphate: step 4/5.</text>
</comment>
<comment type="subunit">
    <text evidence="2">Component of the RNA degradosome, a multiprotein complex involved in RNA processing and mRNA degradation.</text>
</comment>
<comment type="subcellular location">
    <subcellularLocation>
        <location evidence="2">Cytoplasm</location>
    </subcellularLocation>
    <subcellularLocation>
        <location evidence="2">Secreted</location>
    </subcellularLocation>
    <subcellularLocation>
        <location evidence="2">Cell surface</location>
    </subcellularLocation>
    <text evidence="2">Fractions of enolase are present in both the cytoplasm and on the cell surface.</text>
</comment>
<comment type="similarity">
    <text evidence="2">Belongs to the enolase family.</text>
</comment>
<gene>
    <name evidence="2" type="primary">eno</name>
    <name type="ordered locus">c3344</name>
</gene>
<protein>
    <recommendedName>
        <fullName evidence="2">Enolase</fullName>
        <ecNumber evidence="2">4.2.1.11</ecNumber>
    </recommendedName>
    <alternativeName>
        <fullName evidence="2">2-phospho-D-glycerate hydro-lyase</fullName>
    </alternativeName>
    <alternativeName>
        <fullName evidence="2">2-phosphoglycerate dehydratase</fullName>
    </alternativeName>
</protein>
<accession>P0A6Q0</accession>
<accession>P08324</accession>
<proteinExistence type="inferred from homology"/>
<keyword id="KW-0963">Cytoplasm</keyword>
<keyword id="KW-0324">Glycolysis</keyword>
<keyword id="KW-0456">Lyase</keyword>
<keyword id="KW-0460">Magnesium</keyword>
<keyword id="KW-0479">Metal-binding</keyword>
<keyword id="KW-1185">Reference proteome</keyword>
<keyword id="KW-0964">Secreted</keyword>
<sequence length="432" mass="45655">MSKIVKIIGREIIDSRGNPTVEAEVHLEGGFVGMAAAPSGASTGSREALELRDGDKSRFLGKGVTKAVAAVNGPIAQALIGKDAKDQAGIDKIMIDLDGTENKSKFGANAILAVSLANAKAAAAAKGMPLYEHIAELNGTPGKYSMPVPMMNIINGGEHADNNVDIQEFMIQPVGAKTVKEAIRMGSEVFHHLAKVLKAKGMNTAVGDEGGYAPNLGSNAEALAVIAEAVKAAGYELGKDITLAMDCAASEFYKDGKYVLAGEGNKAFTSEEFTHFLEELTKQYPIVSIEDGLDESDWDGFAYQTKVLGDKIQLVGDDLFVTNTKILKEGIEKGIANSILIKFNQIGSLTETLAAIKMAKDAGYTAVISHRSGETEDATIADLAVGTAAGQIKTGSMSRSDRVAKYNQLIRIEEALGEKAPYNGRKEIKGQA</sequence>
<organism>
    <name type="scientific">Escherichia coli O6:H1 (strain CFT073 / ATCC 700928 / UPEC)</name>
    <dbReference type="NCBI Taxonomy" id="199310"/>
    <lineage>
        <taxon>Bacteria</taxon>
        <taxon>Pseudomonadati</taxon>
        <taxon>Pseudomonadota</taxon>
        <taxon>Gammaproteobacteria</taxon>
        <taxon>Enterobacterales</taxon>
        <taxon>Enterobacteriaceae</taxon>
        <taxon>Escherichia</taxon>
    </lineage>
</organism>
<name>ENO_ECOL6</name>
<evidence type="ECO:0000250" key="1"/>
<evidence type="ECO:0000255" key="2">
    <source>
        <dbReference type="HAMAP-Rule" id="MF_00318"/>
    </source>
</evidence>